<sequence length="513" mass="56728">MEISWGRALWRNFLGQSPDWYKLALIIFLIVNPLIFLISPFVAGWLLVAEFIFTLAMALKCYPLLPGGLLAIEAVFIGMTSAEHVREEVAANLEVLLLLMFMVAGIYFMKQLLLFIFTRLLLSIRSKMLLSLSFCVAAAFLSAFLDALTVVAVVISVAVGFYGIYHRVASSRTEDTDLQDDSHIDKHYKVVLEQFRGFLRSLMMHAGVGTALGGVMTMVGEPQNLIIAKAAGWHFGDFFLRMSPVTVPVLICGLLTCLLVEKLRWFGYGETLPEKVREVLQQFDDQSRHQRTRQDKIRLIVQAIIGVWLVTALALHLAEVGLIGLSVIILATSLTGVTDEHAIGKAFTESLPFTALLTVFFSVVAVIIDQQLFSPIIQFVLQASEHAQLSLFYIFNGLLSSISDNVFVGTIYINEAKAAMESGAITLKQYELLAVAINTGTNLPSVATPNGQAAFLFLLTSALAPLIRLSYGRMVWMALPYTLVLTLVGLLCVEFTLAPVTEWFMQMGWIATL</sequence>
<proteinExistence type="inferred from homology"/>
<name>NHAB_ECOLC</name>
<evidence type="ECO:0000255" key="1">
    <source>
        <dbReference type="HAMAP-Rule" id="MF_01599"/>
    </source>
</evidence>
<feature type="chain" id="PRO_1000148036" description="Na(+)/H(+) antiporter NhaB">
    <location>
        <begin position="1"/>
        <end position="513"/>
    </location>
</feature>
<feature type="transmembrane region" description="Helical" evidence="1">
    <location>
        <begin position="23"/>
        <end position="43"/>
    </location>
</feature>
<feature type="transmembrane region" description="Helical" evidence="1">
    <location>
        <begin position="52"/>
        <end position="72"/>
    </location>
</feature>
<feature type="transmembrane region" description="Helical" evidence="1">
    <location>
        <begin position="97"/>
        <end position="117"/>
    </location>
</feature>
<feature type="transmembrane region" description="Helical" evidence="1">
    <location>
        <begin position="120"/>
        <end position="140"/>
    </location>
</feature>
<feature type="transmembrane region" description="Helical" evidence="1">
    <location>
        <begin position="144"/>
        <end position="164"/>
    </location>
</feature>
<feature type="transmembrane region" description="Helical" evidence="1">
    <location>
        <begin position="202"/>
        <end position="222"/>
    </location>
</feature>
<feature type="transmembrane region" description="Helical" evidence="1">
    <location>
        <begin position="238"/>
        <end position="258"/>
    </location>
</feature>
<feature type="transmembrane region" description="Helical" evidence="1">
    <location>
        <begin position="303"/>
        <end position="323"/>
    </location>
</feature>
<feature type="transmembrane region" description="Helical" evidence="1">
    <location>
        <begin position="348"/>
        <end position="368"/>
    </location>
</feature>
<feature type="transmembrane region" description="Helical" evidence="1">
    <location>
        <begin position="391"/>
        <end position="411"/>
    </location>
</feature>
<feature type="transmembrane region" description="Helical" evidence="1">
    <location>
        <begin position="447"/>
        <end position="467"/>
    </location>
</feature>
<feature type="transmembrane region" description="Helical" evidence="1">
    <location>
        <begin position="475"/>
        <end position="495"/>
    </location>
</feature>
<comment type="function">
    <text evidence="1">Na(+)/H(+) antiporter that extrudes sodium in exchange for external protons.</text>
</comment>
<comment type="catalytic activity">
    <reaction evidence="1">
        <text>2 Na(+)(in) + 3 H(+)(out) = 2 Na(+)(out) + 3 H(+)(in)</text>
        <dbReference type="Rhea" id="RHEA:29247"/>
        <dbReference type="ChEBI" id="CHEBI:15378"/>
        <dbReference type="ChEBI" id="CHEBI:29101"/>
    </reaction>
    <physiologicalReaction direction="left-to-right" evidence="1">
        <dbReference type="Rhea" id="RHEA:29248"/>
    </physiologicalReaction>
</comment>
<comment type="subcellular location">
    <subcellularLocation>
        <location evidence="1">Cell inner membrane</location>
        <topology evidence="1">Multi-pass membrane protein</topology>
    </subcellularLocation>
</comment>
<comment type="similarity">
    <text evidence="1">Belongs to the NhaB Na(+)/H(+) (TC 2.A.34) antiporter family.</text>
</comment>
<organism>
    <name type="scientific">Escherichia coli (strain ATCC 8739 / DSM 1576 / NBRC 3972 / NCIMB 8545 / WDCM 00012 / Crooks)</name>
    <dbReference type="NCBI Taxonomy" id="481805"/>
    <lineage>
        <taxon>Bacteria</taxon>
        <taxon>Pseudomonadati</taxon>
        <taxon>Pseudomonadota</taxon>
        <taxon>Gammaproteobacteria</taxon>
        <taxon>Enterobacterales</taxon>
        <taxon>Enterobacteriaceae</taxon>
        <taxon>Escherichia</taxon>
    </lineage>
</organism>
<dbReference type="EMBL" id="CP000946">
    <property type="protein sequence ID" value="ACA78073.1"/>
    <property type="molecule type" value="Genomic_DNA"/>
</dbReference>
<dbReference type="RefSeq" id="WP_000406391.1">
    <property type="nucleotide sequence ID" value="NZ_MTFT01000016.1"/>
</dbReference>
<dbReference type="SMR" id="B1IUA6"/>
<dbReference type="GeneID" id="75203299"/>
<dbReference type="KEGG" id="ecl:EcolC_2439"/>
<dbReference type="HOGENOM" id="CLU_041110_0_0_6"/>
<dbReference type="GO" id="GO:0005886">
    <property type="term" value="C:plasma membrane"/>
    <property type="evidence" value="ECO:0007669"/>
    <property type="project" value="UniProtKB-SubCell"/>
</dbReference>
<dbReference type="GO" id="GO:0015385">
    <property type="term" value="F:sodium:proton antiporter activity"/>
    <property type="evidence" value="ECO:0007669"/>
    <property type="project" value="InterPro"/>
</dbReference>
<dbReference type="HAMAP" id="MF_01599">
    <property type="entry name" value="NhaB"/>
    <property type="match status" value="1"/>
</dbReference>
<dbReference type="InterPro" id="IPR004671">
    <property type="entry name" value="Na+/H+_antiporter_NhaB"/>
</dbReference>
<dbReference type="NCBIfam" id="TIGR00774">
    <property type="entry name" value="NhaB"/>
    <property type="match status" value="1"/>
</dbReference>
<dbReference type="NCBIfam" id="NF007093">
    <property type="entry name" value="PRK09547.1"/>
    <property type="match status" value="1"/>
</dbReference>
<dbReference type="PANTHER" id="PTHR43302:SF1">
    <property type="entry name" value="NA(+)_H(+) ANTIPORTER NHAB"/>
    <property type="match status" value="1"/>
</dbReference>
<dbReference type="PANTHER" id="PTHR43302">
    <property type="entry name" value="TRANSPORTER ARSB-RELATED"/>
    <property type="match status" value="1"/>
</dbReference>
<dbReference type="Pfam" id="PF06450">
    <property type="entry name" value="NhaB"/>
    <property type="match status" value="1"/>
</dbReference>
<keyword id="KW-0050">Antiport</keyword>
<keyword id="KW-0997">Cell inner membrane</keyword>
<keyword id="KW-1003">Cell membrane</keyword>
<keyword id="KW-0406">Ion transport</keyword>
<keyword id="KW-0472">Membrane</keyword>
<keyword id="KW-0915">Sodium</keyword>
<keyword id="KW-0739">Sodium transport</keyword>
<keyword id="KW-0812">Transmembrane</keyword>
<keyword id="KW-1133">Transmembrane helix</keyword>
<keyword id="KW-0813">Transport</keyword>
<protein>
    <recommendedName>
        <fullName evidence="1">Na(+)/H(+) antiporter NhaB</fullName>
    </recommendedName>
    <alternativeName>
        <fullName evidence="1">Sodium/proton antiporter NhaB</fullName>
    </alternativeName>
</protein>
<accession>B1IUA6</accession>
<reference key="1">
    <citation type="submission" date="2008-02" db="EMBL/GenBank/DDBJ databases">
        <title>Complete sequence of Escherichia coli C str. ATCC 8739.</title>
        <authorList>
            <person name="Copeland A."/>
            <person name="Lucas S."/>
            <person name="Lapidus A."/>
            <person name="Glavina del Rio T."/>
            <person name="Dalin E."/>
            <person name="Tice H."/>
            <person name="Bruce D."/>
            <person name="Goodwin L."/>
            <person name="Pitluck S."/>
            <person name="Kiss H."/>
            <person name="Brettin T."/>
            <person name="Detter J.C."/>
            <person name="Han C."/>
            <person name="Kuske C.R."/>
            <person name="Schmutz J."/>
            <person name="Larimer F."/>
            <person name="Land M."/>
            <person name="Hauser L."/>
            <person name="Kyrpides N."/>
            <person name="Mikhailova N."/>
            <person name="Ingram L."/>
            <person name="Richardson P."/>
        </authorList>
    </citation>
    <scope>NUCLEOTIDE SEQUENCE [LARGE SCALE GENOMIC DNA]</scope>
    <source>
        <strain>ATCC 8739 / DSM 1576 / NBRC 3972 / NCIMB 8545 / WDCM 00012 / Crooks</strain>
    </source>
</reference>
<gene>
    <name evidence="1" type="primary">nhaB</name>
    <name type="ordered locus">EcolC_2439</name>
</gene>